<evidence type="ECO:0000250" key="1">
    <source>
        <dbReference type="UniProtKB" id="Q9JIY2"/>
    </source>
</evidence>
<evidence type="ECO:0000255" key="2">
    <source>
        <dbReference type="PROSITE-ProRule" id="PRU00042"/>
    </source>
</evidence>
<evidence type="ECO:0000255" key="3">
    <source>
        <dbReference type="PROSITE-ProRule" id="PRU00175"/>
    </source>
</evidence>
<evidence type="ECO:0000256" key="4">
    <source>
        <dbReference type="SAM" id="MobiDB-lite"/>
    </source>
</evidence>
<evidence type="ECO:0000269" key="5">
    <source>
    </source>
</evidence>
<evidence type="ECO:0000269" key="6">
    <source>
    </source>
</evidence>
<evidence type="ECO:0000269" key="7">
    <source>
    </source>
</evidence>
<evidence type="ECO:0000305" key="8"/>
<evidence type="ECO:0000312" key="9">
    <source>
        <dbReference type="HGNC" id="HGNC:26371"/>
    </source>
</evidence>
<accession>Q8N7E2</accession>
<accession>A0AV29</accession>
<accession>A0AV31</accession>
<accession>E3SBK4</accession>
<accession>Q6DJY9</accession>
<comment type="function">
    <text evidence="6 7">E3 ubiquitin ligase catalyzing the covalent attachment of ubiquitin moieties onto substrate proteins (PubMed:20657603). May operate on tyrosine-phosphorylated SRC substrates (PubMed:22252131).</text>
</comment>
<comment type="catalytic activity">
    <reaction evidence="6">
        <text>S-ubiquitinyl-[E2 ubiquitin-conjugating enzyme]-L-cysteine + [acceptor protein]-L-lysine = [E2 ubiquitin-conjugating enzyme]-L-cysteine + N(6)-ubiquitinyl-[acceptor protein]-L-lysine.</text>
        <dbReference type="EC" id="2.3.2.27"/>
    </reaction>
</comment>
<comment type="pathway">
    <text evidence="6">Protein modification; protein ubiquitination.</text>
</comment>
<comment type="subunit">
    <text evidence="1">Homodimer.</text>
</comment>
<comment type="interaction">
    <interactant intactId="EBI-12196065">
        <id>Q8N7E2</id>
    </interactant>
    <interactant intactId="EBI-3867333">
        <id>A8MQ03</id>
        <label>CYSRT1</label>
    </interactant>
    <organismsDiffer>false</organismsDiffer>
    <experiments>3</experiments>
</comment>
<comment type="interaction">
    <interactant intactId="EBI-12196065">
        <id>Q8N7E2</id>
    </interactant>
    <interactant intactId="EBI-10176379">
        <id>P59991</id>
        <label>KRTAP12-2</label>
    </interactant>
    <organismsDiffer>false</organismsDiffer>
    <experiments>3</experiments>
</comment>
<comment type="interaction">
    <interactant intactId="EBI-12196065">
        <id>Q8N7E2</id>
    </interactant>
    <interactant intactId="EBI-2341787">
        <id>Q17RB8</id>
        <label>LONRF1</label>
    </interactant>
    <organismsDiffer>false</organismsDiffer>
    <experiments>3</experiments>
</comment>
<comment type="interaction">
    <interactant intactId="EBI-12196065">
        <id>Q8N7E2</id>
    </interactant>
    <interactant intactId="EBI-713568">
        <id>P45984</id>
        <label>MAPK9</label>
    </interactant>
    <organismsDiffer>false</organismsDiffer>
    <experiments>3</experiments>
</comment>
<comment type="interaction">
    <interactant intactId="EBI-12196065">
        <id>Q8N7E2</id>
    </interactant>
    <interactant intactId="EBI-724076">
        <id>Q99750</id>
        <label>MDFI</label>
    </interactant>
    <organismsDiffer>false</organismsDiffer>
    <experiments>3</experiments>
</comment>
<comment type="interaction">
    <interactant intactId="EBI-12196065">
        <id>Q8N7E2</id>
    </interactant>
    <interactant intactId="EBI-10232538">
        <id>Q8WWB5</id>
        <label>PIH1D2</label>
    </interactant>
    <organismsDiffer>false</organismsDiffer>
    <experiments>3</experiments>
</comment>
<comment type="interaction">
    <interactant intactId="EBI-12196065">
        <id>Q8N7E2</id>
    </interactant>
    <interactant intactId="EBI-740924">
        <id>Q9NZ81</id>
        <label>PRR13</label>
    </interactant>
    <organismsDiffer>false</organismsDiffer>
    <experiments>3</experiments>
</comment>
<comment type="subcellular location">
    <subcellularLocation>
        <location evidence="6">Cytoplasm</location>
    </subcellularLocation>
    <text evidence="6">Localized over the postacrosomal perinuclear theca region and the entire length of sperm tail.</text>
</comment>
<comment type="tissue specificity">
    <text evidence="6">Exclusively expressed in testis and sperm, including spermatocytes, round and elongated spermatids, and Leydig cells.</text>
</comment>
<comment type="domain">
    <text evidence="1">The HYB domain forms a phosphotyrosine-binding pocket upon dimerization, and mediates as well the recognition of its flanking acidic amino acids.</text>
</comment>
<reference key="1">
    <citation type="journal article" date="2010" name="Asian J. Androl.">
        <title>Human RING finger protein ZNF645 is a novel testis-specific E3 ubiquitin ligase.</title>
        <authorList>
            <person name="Liu Y.Q."/>
            <person name="Bai G."/>
            <person name="Zhang H."/>
            <person name="Su D."/>
            <person name="Tao D.C."/>
            <person name="Yang Y."/>
            <person name="Ma Y.X."/>
            <person name="Zhang S.Z."/>
        </authorList>
    </citation>
    <scope>NUCLEOTIDE SEQUENCE [MRNA]</scope>
    <scope>SUBCELLULAR LOCATION</scope>
    <scope>TISSUE SPECIFICITY</scope>
    <scope>VARIANT GLU-166</scope>
    <scope>CATALYTIC ACTIVITY</scope>
    <source>
        <tissue>Testis</tissue>
    </source>
</reference>
<reference key="2">
    <citation type="journal article" date="2004" name="Nat. Genet.">
        <title>Complete sequencing and characterization of 21,243 full-length human cDNAs.</title>
        <authorList>
            <person name="Ota T."/>
            <person name="Suzuki Y."/>
            <person name="Nishikawa T."/>
            <person name="Otsuki T."/>
            <person name="Sugiyama T."/>
            <person name="Irie R."/>
            <person name="Wakamatsu A."/>
            <person name="Hayashi K."/>
            <person name="Sato H."/>
            <person name="Nagai K."/>
            <person name="Kimura K."/>
            <person name="Makita H."/>
            <person name="Sekine M."/>
            <person name="Obayashi M."/>
            <person name="Nishi T."/>
            <person name="Shibahara T."/>
            <person name="Tanaka T."/>
            <person name="Ishii S."/>
            <person name="Yamamoto J."/>
            <person name="Saito K."/>
            <person name="Kawai Y."/>
            <person name="Isono Y."/>
            <person name="Nakamura Y."/>
            <person name="Nagahari K."/>
            <person name="Murakami K."/>
            <person name="Yasuda T."/>
            <person name="Iwayanagi T."/>
            <person name="Wagatsuma M."/>
            <person name="Shiratori A."/>
            <person name="Sudo H."/>
            <person name="Hosoiri T."/>
            <person name="Kaku Y."/>
            <person name="Kodaira H."/>
            <person name="Kondo H."/>
            <person name="Sugawara M."/>
            <person name="Takahashi M."/>
            <person name="Kanda K."/>
            <person name="Yokoi T."/>
            <person name="Furuya T."/>
            <person name="Kikkawa E."/>
            <person name="Omura Y."/>
            <person name="Abe K."/>
            <person name="Kamihara K."/>
            <person name="Katsuta N."/>
            <person name="Sato K."/>
            <person name="Tanikawa M."/>
            <person name="Yamazaki M."/>
            <person name="Ninomiya K."/>
            <person name="Ishibashi T."/>
            <person name="Yamashita H."/>
            <person name="Murakawa K."/>
            <person name="Fujimori K."/>
            <person name="Tanai H."/>
            <person name="Kimata M."/>
            <person name="Watanabe M."/>
            <person name="Hiraoka S."/>
            <person name="Chiba Y."/>
            <person name="Ishida S."/>
            <person name="Ono Y."/>
            <person name="Takiguchi S."/>
            <person name="Watanabe S."/>
            <person name="Yosida M."/>
            <person name="Hotuta T."/>
            <person name="Kusano J."/>
            <person name="Kanehori K."/>
            <person name="Takahashi-Fujii A."/>
            <person name="Hara H."/>
            <person name="Tanase T.-O."/>
            <person name="Nomura Y."/>
            <person name="Togiya S."/>
            <person name="Komai F."/>
            <person name="Hara R."/>
            <person name="Takeuchi K."/>
            <person name="Arita M."/>
            <person name="Imose N."/>
            <person name="Musashino K."/>
            <person name="Yuuki H."/>
            <person name="Oshima A."/>
            <person name="Sasaki N."/>
            <person name="Aotsuka S."/>
            <person name="Yoshikawa Y."/>
            <person name="Matsunawa H."/>
            <person name="Ichihara T."/>
            <person name="Shiohata N."/>
            <person name="Sano S."/>
            <person name="Moriya S."/>
            <person name="Momiyama H."/>
            <person name="Satoh N."/>
            <person name="Takami S."/>
            <person name="Terashima Y."/>
            <person name="Suzuki O."/>
            <person name="Nakagawa S."/>
            <person name="Senoh A."/>
            <person name="Mizoguchi H."/>
            <person name="Goto Y."/>
            <person name="Shimizu F."/>
            <person name="Wakebe H."/>
            <person name="Hishigaki H."/>
            <person name="Watanabe T."/>
            <person name="Sugiyama A."/>
            <person name="Takemoto M."/>
            <person name="Kawakami B."/>
            <person name="Yamazaki M."/>
            <person name="Watanabe K."/>
            <person name="Kumagai A."/>
            <person name="Itakura S."/>
            <person name="Fukuzumi Y."/>
            <person name="Fujimori Y."/>
            <person name="Komiyama M."/>
            <person name="Tashiro H."/>
            <person name="Tanigami A."/>
            <person name="Fujiwara T."/>
            <person name="Ono T."/>
            <person name="Yamada K."/>
            <person name="Fujii Y."/>
            <person name="Ozaki K."/>
            <person name="Hirao M."/>
            <person name="Ohmori Y."/>
            <person name="Kawabata A."/>
            <person name="Hikiji T."/>
            <person name="Kobatake N."/>
            <person name="Inagaki H."/>
            <person name="Ikema Y."/>
            <person name="Okamoto S."/>
            <person name="Okitani R."/>
            <person name="Kawakami T."/>
            <person name="Noguchi S."/>
            <person name="Itoh T."/>
            <person name="Shigeta K."/>
            <person name="Senba T."/>
            <person name="Matsumura K."/>
            <person name="Nakajima Y."/>
            <person name="Mizuno T."/>
            <person name="Morinaga M."/>
            <person name="Sasaki M."/>
            <person name="Togashi T."/>
            <person name="Oyama M."/>
            <person name="Hata H."/>
            <person name="Watanabe M."/>
            <person name="Komatsu T."/>
            <person name="Mizushima-Sugano J."/>
            <person name="Satoh T."/>
            <person name="Shirai Y."/>
            <person name="Takahashi Y."/>
            <person name="Nakagawa K."/>
            <person name="Okumura K."/>
            <person name="Nagase T."/>
            <person name="Nomura N."/>
            <person name="Kikuchi H."/>
            <person name="Masuho Y."/>
            <person name="Yamashita R."/>
            <person name="Nakai K."/>
            <person name="Yada T."/>
            <person name="Nakamura Y."/>
            <person name="Ohara O."/>
            <person name="Isogai T."/>
            <person name="Sugano S."/>
        </authorList>
    </citation>
    <scope>NUCLEOTIDE SEQUENCE [LARGE SCALE MRNA]</scope>
    <source>
        <tissue>Testis</tissue>
    </source>
</reference>
<reference key="3">
    <citation type="journal article" date="2005" name="Nature">
        <title>The DNA sequence of the human X chromosome.</title>
        <authorList>
            <person name="Ross M.T."/>
            <person name="Grafham D.V."/>
            <person name="Coffey A.J."/>
            <person name="Scherer S."/>
            <person name="McLay K."/>
            <person name="Muzny D."/>
            <person name="Platzer M."/>
            <person name="Howell G.R."/>
            <person name="Burrows C."/>
            <person name="Bird C.P."/>
            <person name="Frankish A."/>
            <person name="Lovell F.L."/>
            <person name="Howe K.L."/>
            <person name="Ashurst J.L."/>
            <person name="Fulton R.S."/>
            <person name="Sudbrak R."/>
            <person name="Wen G."/>
            <person name="Jones M.C."/>
            <person name="Hurles M.E."/>
            <person name="Andrews T.D."/>
            <person name="Scott C.E."/>
            <person name="Searle S."/>
            <person name="Ramser J."/>
            <person name="Whittaker A."/>
            <person name="Deadman R."/>
            <person name="Carter N.P."/>
            <person name="Hunt S.E."/>
            <person name="Chen R."/>
            <person name="Cree A."/>
            <person name="Gunaratne P."/>
            <person name="Havlak P."/>
            <person name="Hodgson A."/>
            <person name="Metzker M.L."/>
            <person name="Richards S."/>
            <person name="Scott G."/>
            <person name="Steffen D."/>
            <person name="Sodergren E."/>
            <person name="Wheeler D.A."/>
            <person name="Worley K.C."/>
            <person name="Ainscough R."/>
            <person name="Ambrose K.D."/>
            <person name="Ansari-Lari M.A."/>
            <person name="Aradhya S."/>
            <person name="Ashwell R.I."/>
            <person name="Babbage A.K."/>
            <person name="Bagguley C.L."/>
            <person name="Ballabio A."/>
            <person name="Banerjee R."/>
            <person name="Barker G.E."/>
            <person name="Barlow K.F."/>
            <person name="Barrett I.P."/>
            <person name="Bates K.N."/>
            <person name="Beare D.M."/>
            <person name="Beasley H."/>
            <person name="Beasley O."/>
            <person name="Beck A."/>
            <person name="Bethel G."/>
            <person name="Blechschmidt K."/>
            <person name="Brady N."/>
            <person name="Bray-Allen S."/>
            <person name="Bridgeman A.M."/>
            <person name="Brown A.J."/>
            <person name="Brown M.J."/>
            <person name="Bonnin D."/>
            <person name="Bruford E.A."/>
            <person name="Buhay C."/>
            <person name="Burch P."/>
            <person name="Burford D."/>
            <person name="Burgess J."/>
            <person name="Burrill W."/>
            <person name="Burton J."/>
            <person name="Bye J.M."/>
            <person name="Carder C."/>
            <person name="Carrel L."/>
            <person name="Chako J."/>
            <person name="Chapman J.C."/>
            <person name="Chavez D."/>
            <person name="Chen E."/>
            <person name="Chen G."/>
            <person name="Chen Y."/>
            <person name="Chen Z."/>
            <person name="Chinault C."/>
            <person name="Ciccodicola A."/>
            <person name="Clark S.Y."/>
            <person name="Clarke G."/>
            <person name="Clee C.M."/>
            <person name="Clegg S."/>
            <person name="Clerc-Blankenburg K."/>
            <person name="Clifford K."/>
            <person name="Cobley V."/>
            <person name="Cole C.G."/>
            <person name="Conquer J.S."/>
            <person name="Corby N."/>
            <person name="Connor R.E."/>
            <person name="David R."/>
            <person name="Davies J."/>
            <person name="Davis C."/>
            <person name="Davis J."/>
            <person name="Delgado O."/>
            <person name="Deshazo D."/>
            <person name="Dhami P."/>
            <person name="Ding Y."/>
            <person name="Dinh H."/>
            <person name="Dodsworth S."/>
            <person name="Draper H."/>
            <person name="Dugan-Rocha S."/>
            <person name="Dunham A."/>
            <person name="Dunn M."/>
            <person name="Durbin K.J."/>
            <person name="Dutta I."/>
            <person name="Eades T."/>
            <person name="Ellwood M."/>
            <person name="Emery-Cohen A."/>
            <person name="Errington H."/>
            <person name="Evans K.L."/>
            <person name="Faulkner L."/>
            <person name="Francis F."/>
            <person name="Frankland J."/>
            <person name="Fraser A.E."/>
            <person name="Galgoczy P."/>
            <person name="Gilbert J."/>
            <person name="Gill R."/>
            <person name="Gloeckner G."/>
            <person name="Gregory S.G."/>
            <person name="Gribble S."/>
            <person name="Griffiths C."/>
            <person name="Grocock R."/>
            <person name="Gu Y."/>
            <person name="Gwilliam R."/>
            <person name="Hamilton C."/>
            <person name="Hart E.A."/>
            <person name="Hawes A."/>
            <person name="Heath P.D."/>
            <person name="Heitmann K."/>
            <person name="Hennig S."/>
            <person name="Hernandez J."/>
            <person name="Hinzmann B."/>
            <person name="Ho S."/>
            <person name="Hoffs M."/>
            <person name="Howden P.J."/>
            <person name="Huckle E.J."/>
            <person name="Hume J."/>
            <person name="Hunt P.J."/>
            <person name="Hunt A.R."/>
            <person name="Isherwood J."/>
            <person name="Jacob L."/>
            <person name="Johnson D."/>
            <person name="Jones S."/>
            <person name="de Jong P.J."/>
            <person name="Joseph S.S."/>
            <person name="Keenan S."/>
            <person name="Kelly S."/>
            <person name="Kershaw J.K."/>
            <person name="Khan Z."/>
            <person name="Kioschis P."/>
            <person name="Klages S."/>
            <person name="Knights A.J."/>
            <person name="Kosiura A."/>
            <person name="Kovar-Smith C."/>
            <person name="Laird G.K."/>
            <person name="Langford C."/>
            <person name="Lawlor S."/>
            <person name="Leversha M."/>
            <person name="Lewis L."/>
            <person name="Liu W."/>
            <person name="Lloyd C."/>
            <person name="Lloyd D.M."/>
            <person name="Loulseged H."/>
            <person name="Loveland J.E."/>
            <person name="Lovell J.D."/>
            <person name="Lozado R."/>
            <person name="Lu J."/>
            <person name="Lyne R."/>
            <person name="Ma J."/>
            <person name="Maheshwari M."/>
            <person name="Matthews L.H."/>
            <person name="McDowall J."/>
            <person name="McLaren S."/>
            <person name="McMurray A."/>
            <person name="Meidl P."/>
            <person name="Meitinger T."/>
            <person name="Milne S."/>
            <person name="Miner G."/>
            <person name="Mistry S.L."/>
            <person name="Morgan M."/>
            <person name="Morris S."/>
            <person name="Mueller I."/>
            <person name="Mullikin J.C."/>
            <person name="Nguyen N."/>
            <person name="Nordsiek G."/>
            <person name="Nyakatura G."/>
            <person name="O'dell C.N."/>
            <person name="Okwuonu G."/>
            <person name="Palmer S."/>
            <person name="Pandian R."/>
            <person name="Parker D."/>
            <person name="Parrish J."/>
            <person name="Pasternak S."/>
            <person name="Patel D."/>
            <person name="Pearce A.V."/>
            <person name="Pearson D.M."/>
            <person name="Pelan S.E."/>
            <person name="Perez L."/>
            <person name="Porter K.M."/>
            <person name="Ramsey Y."/>
            <person name="Reichwald K."/>
            <person name="Rhodes S."/>
            <person name="Ridler K.A."/>
            <person name="Schlessinger D."/>
            <person name="Schueler M.G."/>
            <person name="Sehra H.K."/>
            <person name="Shaw-Smith C."/>
            <person name="Shen H."/>
            <person name="Sheridan E.M."/>
            <person name="Shownkeen R."/>
            <person name="Skuce C.D."/>
            <person name="Smith M.L."/>
            <person name="Sotheran E.C."/>
            <person name="Steingruber H.E."/>
            <person name="Steward C.A."/>
            <person name="Storey R."/>
            <person name="Swann R.M."/>
            <person name="Swarbreck D."/>
            <person name="Tabor P.E."/>
            <person name="Taudien S."/>
            <person name="Taylor T."/>
            <person name="Teague B."/>
            <person name="Thomas K."/>
            <person name="Thorpe A."/>
            <person name="Timms K."/>
            <person name="Tracey A."/>
            <person name="Trevanion S."/>
            <person name="Tromans A.C."/>
            <person name="d'Urso M."/>
            <person name="Verduzco D."/>
            <person name="Villasana D."/>
            <person name="Waldron L."/>
            <person name="Wall M."/>
            <person name="Wang Q."/>
            <person name="Warren J."/>
            <person name="Warry G.L."/>
            <person name="Wei X."/>
            <person name="West A."/>
            <person name="Whitehead S.L."/>
            <person name="Whiteley M.N."/>
            <person name="Wilkinson J.E."/>
            <person name="Willey D.L."/>
            <person name="Williams G."/>
            <person name="Williams L."/>
            <person name="Williamson A."/>
            <person name="Williamson H."/>
            <person name="Wilming L."/>
            <person name="Woodmansey R.L."/>
            <person name="Wray P.W."/>
            <person name="Yen J."/>
            <person name="Zhang J."/>
            <person name="Zhou J."/>
            <person name="Zoghbi H."/>
            <person name="Zorilla S."/>
            <person name="Buck D."/>
            <person name="Reinhardt R."/>
            <person name="Poustka A."/>
            <person name="Rosenthal A."/>
            <person name="Lehrach H."/>
            <person name="Meindl A."/>
            <person name="Minx P.J."/>
            <person name="Hillier L.W."/>
            <person name="Willard H.F."/>
            <person name="Wilson R.K."/>
            <person name="Waterston R.H."/>
            <person name="Rice C.M."/>
            <person name="Vaudin M."/>
            <person name="Coulson A."/>
            <person name="Nelson D.L."/>
            <person name="Weinstock G."/>
            <person name="Sulston J.E."/>
            <person name="Durbin R.M."/>
            <person name="Hubbard T."/>
            <person name="Gibbs R.A."/>
            <person name="Beck S."/>
            <person name="Rogers J."/>
            <person name="Bentley D.R."/>
        </authorList>
    </citation>
    <scope>NUCLEOTIDE SEQUENCE [LARGE SCALE GENOMIC DNA]</scope>
</reference>
<reference key="4">
    <citation type="journal article" date="2004" name="Genome Res.">
        <title>The status, quality, and expansion of the NIH full-length cDNA project: the Mammalian Gene Collection (MGC).</title>
        <authorList>
            <consortium name="The MGC Project Team"/>
        </authorList>
    </citation>
    <scope>NUCLEOTIDE SEQUENCE [LARGE SCALE MRNA]</scope>
    <scope>VARIANT GLU-166</scope>
</reference>
<reference key="5">
    <citation type="journal article" date="2012" name="EMBO J.">
        <title>Structure of a novel phosphotyrosine-binding domain in Hakai that targets E-cadherin.</title>
        <authorList>
            <person name="Mukherjee M."/>
            <person name="Chow S.Y."/>
            <person name="Yusoff P."/>
            <person name="Seetharaman J."/>
            <person name="Ng C."/>
            <person name="Sinniah S."/>
            <person name="Koh X.W."/>
            <person name="Asgar N.F."/>
            <person name="Li D."/>
            <person name="Yim D."/>
            <person name="Jackson R.A."/>
            <person name="Yew J."/>
            <person name="Qian J."/>
            <person name="Iyu A."/>
            <person name="Lim Y.P."/>
            <person name="Zhou X."/>
            <person name="Sze S.K."/>
            <person name="Guy G.R."/>
            <person name="Sivaraman J."/>
        </authorList>
    </citation>
    <scope>FUNCTION</scope>
    <scope>DOMAIN HYB</scope>
</reference>
<organism>
    <name type="scientific">Homo sapiens</name>
    <name type="common">Human</name>
    <dbReference type="NCBI Taxonomy" id="9606"/>
    <lineage>
        <taxon>Eukaryota</taxon>
        <taxon>Metazoa</taxon>
        <taxon>Chordata</taxon>
        <taxon>Craniata</taxon>
        <taxon>Vertebrata</taxon>
        <taxon>Euteleostomi</taxon>
        <taxon>Mammalia</taxon>
        <taxon>Eutheria</taxon>
        <taxon>Euarchontoglires</taxon>
        <taxon>Primates</taxon>
        <taxon>Haplorrhini</taxon>
        <taxon>Catarrhini</taxon>
        <taxon>Hominidae</taxon>
        <taxon>Homo</taxon>
    </lineage>
</organism>
<gene>
    <name evidence="9" type="primary">CBLL2</name>
    <name type="synonym">ZNF645</name>
</gene>
<dbReference type="EC" id="2.3.2.27" evidence="6"/>
<dbReference type="EMBL" id="GQ355336">
    <property type="protein sequence ID" value="ADI56589.1"/>
    <property type="molecule type" value="mRNA"/>
</dbReference>
<dbReference type="EMBL" id="AK098601">
    <property type="protein sequence ID" value="BAC05348.1"/>
    <property type="molecule type" value="mRNA"/>
</dbReference>
<dbReference type="EMBL" id="BX293560">
    <property type="status" value="NOT_ANNOTATED_CDS"/>
    <property type="molecule type" value="Genomic_DNA"/>
</dbReference>
<dbReference type="EMBL" id="BC074910">
    <property type="protein sequence ID" value="AAH74910.1"/>
    <property type="molecule type" value="mRNA"/>
</dbReference>
<dbReference type="EMBL" id="BC126190">
    <property type="protein sequence ID" value="AAI26191.1"/>
    <property type="molecule type" value="mRNA"/>
</dbReference>
<dbReference type="EMBL" id="BC126192">
    <property type="protein sequence ID" value="AAI26193.1"/>
    <property type="molecule type" value="mRNA"/>
</dbReference>
<dbReference type="CCDS" id="CCDS14205.1"/>
<dbReference type="RefSeq" id="NP_689790.1">
    <property type="nucleotide sequence ID" value="NM_152577.4"/>
</dbReference>
<dbReference type="SMR" id="Q8N7E2"/>
<dbReference type="BioGRID" id="127688">
    <property type="interactions" value="21"/>
</dbReference>
<dbReference type="FunCoup" id="Q8N7E2">
    <property type="interactions" value="8"/>
</dbReference>
<dbReference type="IntAct" id="Q8N7E2">
    <property type="interactions" value="18"/>
</dbReference>
<dbReference type="STRING" id="9606.ENSP00000323348"/>
<dbReference type="GlyGen" id="Q8N7E2">
    <property type="glycosylation" value="1 site"/>
</dbReference>
<dbReference type="iPTMnet" id="Q8N7E2"/>
<dbReference type="PhosphoSitePlus" id="Q8N7E2"/>
<dbReference type="BioMuta" id="ZNF645"/>
<dbReference type="DMDM" id="74759980"/>
<dbReference type="MassIVE" id="Q8N7E2"/>
<dbReference type="PaxDb" id="9606-ENSP00000323348"/>
<dbReference type="ProteomicsDB" id="72291"/>
<dbReference type="Antibodypedia" id="399">
    <property type="antibodies" value="79 antibodies from 23 providers"/>
</dbReference>
<dbReference type="DNASU" id="158506"/>
<dbReference type="Ensembl" id="ENST00000323684.4">
    <property type="protein sequence ID" value="ENSP00000323348.2"/>
    <property type="gene ID" value="ENSG00000175809.6"/>
</dbReference>
<dbReference type="GeneID" id="158506"/>
<dbReference type="KEGG" id="hsa:158506"/>
<dbReference type="MANE-Select" id="ENST00000323684.4">
    <property type="protein sequence ID" value="ENSP00000323348.2"/>
    <property type="RefSeq nucleotide sequence ID" value="NM_152577.4"/>
    <property type="RefSeq protein sequence ID" value="NP_689790.1"/>
</dbReference>
<dbReference type="UCSC" id="uc004dai.3">
    <property type="organism name" value="human"/>
</dbReference>
<dbReference type="AGR" id="HGNC:26371"/>
<dbReference type="CTD" id="158506"/>
<dbReference type="DisGeNET" id="158506"/>
<dbReference type="GeneCards" id="CBLL2"/>
<dbReference type="HGNC" id="HGNC:26371">
    <property type="gene designation" value="CBLL2"/>
</dbReference>
<dbReference type="HPA" id="ENSG00000175809">
    <property type="expression patterns" value="Tissue enriched (testis)"/>
</dbReference>
<dbReference type="neXtProt" id="NX_Q8N7E2"/>
<dbReference type="OpenTargets" id="ENSG00000175809"/>
<dbReference type="PharmGKB" id="PA134934025"/>
<dbReference type="VEuPathDB" id="HostDB:ENSG00000175809"/>
<dbReference type="eggNOG" id="KOG2932">
    <property type="taxonomic scope" value="Eukaryota"/>
</dbReference>
<dbReference type="GeneTree" id="ENSGT00510000047522"/>
<dbReference type="HOGENOM" id="CLU_031291_1_0_1"/>
<dbReference type="InParanoid" id="Q8N7E2"/>
<dbReference type="OMA" id="PFPIQWE"/>
<dbReference type="OrthoDB" id="547746at2759"/>
<dbReference type="PAN-GO" id="Q8N7E2">
    <property type="GO annotations" value="3 GO annotations based on evolutionary models"/>
</dbReference>
<dbReference type="PhylomeDB" id="Q8N7E2"/>
<dbReference type="TreeFam" id="TF332910"/>
<dbReference type="PathwayCommons" id="Q8N7E2"/>
<dbReference type="Reactome" id="R-HSA-983168">
    <property type="pathway name" value="Antigen processing: Ubiquitination &amp; Proteasome degradation"/>
</dbReference>
<dbReference type="SignaLink" id="Q8N7E2"/>
<dbReference type="SIGNOR" id="Q8N7E2"/>
<dbReference type="UniPathway" id="UPA00143"/>
<dbReference type="BioGRID-ORCS" id="158506">
    <property type="hits" value="20 hits in 806 CRISPR screens"/>
</dbReference>
<dbReference type="GenomeRNAi" id="158506"/>
<dbReference type="Pharos" id="Q8N7E2">
    <property type="development level" value="Tdark"/>
</dbReference>
<dbReference type="PRO" id="PR:Q8N7E2"/>
<dbReference type="Proteomes" id="UP000005640">
    <property type="component" value="Chromosome X"/>
</dbReference>
<dbReference type="RNAct" id="Q8N7E2">
    <property type="molecule type" value="protein"/>
</dbReference>
<dbReference type="Bgee" id="ENSG00000175809">
    <property type="expression patterns" value="Expressed in sperm and 14 other cell types or tissues"/>
</dbReference>
<dbReference type="GO" id="GO:0005737">
    <property type="term" value="C:cytoplasm"/>
    <property type="evidence" value="ECO:0007669"/>
    <property type="project" value="UniProtKB-SubCell"/>
</dbReference>
<dbReference type="GO" id="GO:0061630">
    <property type="term" value="F:ubiquitin protein ligase activity"/>
    <property type="evidence" value="ECO:0000318"/>
    <property type="project" value="GO_Central"/>
</dbReference>
<dbReference type="GO" id="GO:0008270">
    <property type="term" value="F:zinc ion binding"/>
    <property type="evidence" value="ECO:0007669"/>
    <property type="project" value="UniProtKB-KW"/>
</dbReference>
<dbReference type="GO" id="GO:0016567">
    <property type="term" value="P:protein ubiquitination"/>
    <property type="evidence" value="ECO:0000318"/>
    <property type="project" value="GO_Central"/>
</dbReference>
<dbReference type="GO" id="GO:0030155">
    <property type="term" value="P:regulation of cell adhesion"/>
    <property type="evidence" value="ECO:0000318"/>
    <property type="project" value="GO_Central"/>
</dbReference>
<dbReference type="CDD" id="cd16508">
    <property type="entry name" value="RING-HC_HAKAI-like"/>
    <property type="match status" value="1"/>
</dbReference>
<dbReference type="FunFam" id="6.10.140.2210:FF:000001">
    <property type="entry name" value="Putative e3 ubiquitin-protein ligase hakai"/>
    <property type="match status" value="1"/>
</dbReference>
<dbReference type="Gene3D" id="6.10.140.2210">
    <property type="match status" value="1"/>
</dbReference>
<dbReference type="Gene3D" id="3.30.40.10">
    <property type="entry name" value="Zinc/RING finger domain, C3HC4 (zinc finger)"/>
    <property type="match status" value="1"/>
</dbReference>
<dbReference type="InterPro" id="IPR040380">
    <property type="entry name" value="HAKAI-like_RING-HC"/>
</dbReference>
<dbReference type="InterPro" id="IPR040383">
    <property type="entry name" value="HAKAI/CBLL2"/>
</dbReference>
<dbReference type="InterPro" id="IPR013087">
    <property type="entry name" value="Znf_C2H2_type"/>
</dbReference>
<dbReference type="InterPro" id="IPR041042">
    <property type="entry name" value="Znf_Hakai"/>
</dbReference>
<dbReference type="InterPro" id="IPR001841">
    <property type="entry name" value="Znf_RING"/>
</dbReference>
<dbReference type="InterPro" id="IPR013083">
    <property type="entry name" value="Znf_RING/FYVE/PHD"/>
</dbReference>
<dbReference type="InterPro" id="IPR017907">
    <property type="entry name" value="Znf_RING_CS"/>
</dbReference>
<dbReference type="PANTHER" id="PTHR13480:SF1">
    <property type="entry name" value="E3 UBIQUITIN-PROTEIN LIGASE CBLL2"/>
    <property type="match status" value="1"/>
</dbReference>
<dbReference type="PANTHER" id="PTHR13480">
    <property type="entry name" value="E3 UBIQUITIN-PROTEIN LIGASE HAKAI-RELATED"/>
    <property type="match status" value="1"/>
</dbReference>
<dbReference type="Pfam" id="PF18408">
    <property type="entry name" value="zf_Hakai"/>
    <property type="match status" value="1"/>
</dbReference>
<dbReference type="SUPFAM" id="SSF57850">
    <property type="entry name" value="RING/U-box"/>
    <property type="match status" value="1"/>
</dbReference>
<dbReference type="PROSITE" id="PS00518">
    <property type="entry name" value="ZF_RING_1"/>
    <property type="match status" value="1"/>
</dbReference>
<dbReference type="PROSITE" id="PS50089">
    <property type="entry name" value="ZF_RING_2"/>
    <property type="match status" value="1"/>
</dbReference>
<dbReference type="PROSITE" id="PS50157">
    <property type="entry name" value="ZINC_FINGER_C2H2_2"/>
    <property type="match status" value="1"/>
</dbReference>
<name>CBLL2_HUMAN</name>
<feature type="chain" id="PRO_0000056316" description="E3 ubiquitin-protein ligase CBLL2">
    <location>
        <begin position="1"/>
        <end position="425"/>
    </location>
</feature>
<feature type="zinc finger region" description="RING-type" evidence="3">
    <location>
        <begin position="57"/>
        <end position="97"/>
    </location>
</feature>
<feature type="zinc finger region" description="C2H2-type" evidence="2">
    <location>
        <begin position="112"/>
        <end position="138"/>
    </location>
</feature>
<feature type="region of interest" description="HYB domain">
    <location>
        <begin position="96"/>
        <end position="154"/>
    </location>
</feature>
<feature type="region of interest" description="Disordered" evidence="4">
    <location>
        <begin position="241"/>
        <end position="297"/>
    </location>
</feature>
<feature type="region of interest" description="Disordered" evidence="4">
    <location>
        <begin position="382"/>
        <end position="425"/>
    </location>
</feature>
<feature type="compositionally biased region" description="Pro residues" evidence="4">
    <location>
        <begin position="398"/>
        <end position="408"/>
    </location>
</feature>
<feature type="compositionally biased region" description="Basic residues" evidence="4">
    <location>
        <begin position="412"/>
        <end position="425"/>
    </location>
</feature>
<feature type="sequence variant" id="VAR_030340" description="In dbSNP:rs5951426." evidence="5 6">
    <original>D</original>
    <variation>E</variation>
    <location>
        <position position="166"/>
    </location>
</feature>
<feature type="sequence variant" id="VAR_030341" description="In dbSNP:rs12860105.">
    <original>S</original>
    <variation>F</variation>
    <location>
        <position position="287"/>
    </location>
</feature>
<feature type="sequence conflict" description="In Ref. 1; ADI56589." evidence="8" ref="1">
    <original>P</original>
    <variation>L</variation>
    <location>
        <position position="267"/>
    </location>
</feature>
<feature type="sequence conflict" description="In Ref. 1; ADI56589." evidence="8" ref="1">
    <original>H</original>
    <variation>Q</variation>
    <location>
        <position position="411"/>
    </location>
</feature>
<proteinExistence type="evidence at protein level"/>
<protein>
    <recommendedName>
        <fullName evidence="8">E3 ubiquitin-protein ligase CBLL2</fullName>
        <ecNumber evidence="6">2.3.2.27</ecNumber>
    </recommendedName>
    <alternativeName>
        <fullName>Cbl proto-oncogene-like protein 2</fullName>
    </alternativeName>
    <alternativeName>
        <fullName>RING-type E3 ubiquitin transferase ZNF645</fullName>
    </alternativeName>
    <alternativeName>
        <fullName>Zinc finger protein 645</fullName>
    </alternativeName>
    <alternativeName>
        <fullName>c-Cbl-like protein 2</fullName>
    </alternativeName>
</protein>
<keyword id="KW-0963">Cytoplasm</keyword>
<keyword id="KW-0479">Metal-binding</keyword>
<keyword id="KW-1185">Reference proteome</keyword>
<keyword id="KW-0808">Transferase</keyword>
<keyword id="KW-0833">Ubl conjugation pathway</keyword>
<keyword id="KW-0862">Zinc</keyword>
<keyword id="KW-0863">Zinc-finger</keyword>
<sequence length="425" mass="48785">MNKMPAGEQECEYNKEGKYYSKGVKLVRKKKKIPGYRWGDIKINIIGEKDDLPIHFCDKCDLPIKIYGRIIPCKHAFCYHCANLYDKVGYKVCPRCRYPVLRIEAHKRGSVFMCSIVQQCKRTYLSQKSLQAHIKRRHKRARKQVTSASLEKVRPHIAPPQTEISDIPKRLQDRDHLSYIPPEQHTMVSLPSVQHMLQEQHNQPHKDIQAPPPELSLSLPFPIQWETVSIFTRKHGNLTVDHIQNNSDSGAKKPTPPDYYPECQSQPAVSSPHHIIPQKQHYAPPPSPSSPVNHQMPYPPQDVVTPNSVRSQVPALTTTYDPSSGYIIVKVPPDMNSPPLRAPQSQNGNPSASEFASHHYNLNILPQFTENQETLSPQFTQTDAMDHRRWPAWKRLSPCPPTRSPPPSTLHGRSHHSHQRRHRRY</sequence>